<accession>B2S1S1</accession>
<comment type="function">
    <text evidence="1">Catalyzes the conversion of lactate to pyruvate.</text>
</comment>
<comment type="catalytic activity">
    <reaction evidence="1">
        <text>(S)-lactate + NAD(+) = pyruvate + NADH + H(+)</text>
        <dbReference type="Rhea" id="RHEA:23444"/>
        <dbReference type="ChEBI" id="CHEBI:15361"/>
        <dbReference type="ChEBI" id="CHEBI:15378"/>
        <dbReference type="ChEBI" id="CHEBI:16651"/>
        <dbReference type="ChEBI" id="CHEBI:57540"/>
        <dbReference type="ChEBI" id="CHEBI:57945"/>
        <dbReference type="EC" id="1.1.1.27"/>
    </reaction>
</comment>
<comment type="activity regulation">
    <text evidence="1">Allosterically activated by fructose 1,6-bisphosphate (FBP).</text>
</comment>
<comment type="pathway">
    <text evidence="1">Fermentation; pyruvate fermentation to lactate; (S)-lactate from pyruvate: step 1/1.</text>
</comment>
<comment type="subunit">
    <text evidence="1">Homotetramer.</text>
</comment>
<comment type="subcellular location">
    <subcellularLocation>
        <location evidence="1">Cytoplasm</location>
    </subcellularLocation>
</comment>
<comment type="similarity">
    <text evidence="1">Belongs to the LDH/MDH superfamily. LDH family.</text>
</comment>
<gene>
    <name evidence="1" type="primary">ldh</name>
    <name type="ordered locus">BH0087</name>
</gene>
<evidence type="ECO:0000255" key="1">
    <source>
        <dbReference type="HAMAP-Rule" id="MF_00488"/>
    </source>
</evidence>
<dbReference type="EC" id="1.1.1.27" evidence="1"/>
<dbReference type="EMBL" id="CP000048">
    <property type="protein sequence ID" value="AAX16608.1"/>
    <property type="molecule type" value="Genomic_DNA"/>
</dbReference>
<dbReference type="RefSeq" id="WP_012421865.1">
    <property type="nucleotide sequence ID" value="NC_010673.1"/>
</dbReference>
<dbReference type="SMR" id="B2S1S1"/>
<dbReference type="KEGG" id="bhr:BH0087"/>
<dbReference type="HOGENOM" id="CLU_045401_1_1_12"/>
<dbReference type="UniPathway" id="UPA00554">
    <property type="reaction ID" value="UER00611"/>
</dbReference>
<dbReference type="Proteomes" id="UP000008834">
    <property type="component" value="Chromosome"/>
</dbReference>
<dbReference type="GO" id="GO:0005737">
    <property type="term" value="C:cytoplasm"/>
    <property type="evidence" value="ECO:0007669"/>
    <property type="project" value="UniProtKB-SubCell"/>
</dbReference>
<dbReference type="GO" id="GO:0004459">
    <property type="term" value="F:L-lactate dehydrogenase activity"/>
    <property type="evidence" value="ECO:0007669"/>
    <property type="project" value="UniProtKB-UniRule"/>
</dbReference>
<dbReference type="GO" id="GO:0006096">
    <property type="term" value="P:glycolytic process"/>
    <property type="evidence" value="ECO:0007669"/>
    <property type="project" value="UniProtKB-UniRule"/>
</dbReference>
<dbReference type="GO" id="GO:0006089">
    <property type="term" value="P:lactate metabolic process"/>
    <property type="evidence" value="ECO:0007669"/>
    <property type="project" value="TreeGrafter"/>
</dbReference>
<dbReference type="CDD" id="cd05291">
    <property type="entry name" value="HicDH_like"/>
    <property type="match status" value="1"/>
</dbReference>
<dbReference type="FunFam" id="3.40.50.720:FF:000018">
    <property type="entry name" value="Malate dehydrogenase"/>
    <property type="match status" value="1"/>
</dbReference>
<dbReference type="Gene3D" id="3.90.110.10">
    <property type="entry name" value="Lactate dehydrogenase/glycoside hydrolase, family 4, C-terminal"/>
    <property type="match status" value="1"/>
</dbReference>
<dbReference type="Gene3D" id="3.40.50.720">
    <property type="entry name" value="NAD(P)-binding Rossmann-like Domain"/>
    <property type="match status" value="1"/>
</dbReference>
<dbReference type="HAMAP" id="MF_00488">
    <property type="entry name" value="Lactate_dehydrog"/>
    <property type="match status" value="1"/>
</dbReference>
<dbReference type="InterPro" id="IPR001557">
    <property type="entry name" value="L-lactate/malate_DH"/>
</dbReference>
<dbReference type="InterPro" id="IPR011304">
    <property type="entry name" value="L-lactate_DH"/>
</dbReference>
<dbReference type="InterPro" id="IPR018177">
    <property type="entry name" value="L-lactate_DH_AS"/>
</dbReference>
<dbReference type="InterPro" id="IPR022383">
    <property type="entry name" value="Lactate/malate_DH_C"/>
</dbReference>
<dbReference type="InterPro" id="IPR001236">
    <property type="entry name" value="Lactate/malate_DH_N"/>
</dbReference>
<dbReference type="InterPro" id="IPR015955">
    <property type="entry name" value="Lactate_DH/Glyco_Ohase_4_C"/>
</dbReference>
<dbReference type="InterPro" id="IPR036291">
    <property type="entry name" value="NAD(P)-bd_dom_sf"/>
</dbReference>
<dbReference type="NCBIfam" id="TIGR01771">
    <property type="entry name" value="L-LDH-NAD"/>
    <property type="match status" value="1"/>
</dbReference>
<dbReference type="NCBIfam" id="NF000824">
    <property type="entry name" value="PRK00066.1"/>
    <property type="match status" value="1"/>
</dbReference>
<dbReference type="PANTHER" id="PTHR43128">
    <property type="entry name" value="L-2-HYDROXYCARBOXYLATE DEHYDROGENASE (NAD(P)(+))"/>
    <property type="match status" value="1"/>
</dbReference>
<dbReference type="PANTHER" id="PTHR43128:SF16">
    <property type="entry name" value="L-LACTATE DEHYDROGENASE"/>
    <property type="match status" value="1"/>
</dbReference>
<dbReference type="Pfam" id="PF02866">
    <property type="entry name" value="Ldh_1_C"/>
    <property type="match status" value="1"/>
</dbReference>
<dbReference type="Pfam" id="PF00056">
    <property type="entry name" value="Ldh_1_N"/>
    <property type="match status" value="1"/>
</dbReference>
<dbReference type="PIRSF" id="PIRSF000102">
    <property type="entry name" value="Lac_mal_DH"/>
    <property type="match status" value="1"/>
</dbReference>
<dbReference type="PRINTS" id="PR00086">
    <property type="entry name" value="LLDHDRGNASE"/>
</dbReference>
<dbReference type="SUPFAM" id="SSF56327">
    <property type="entry name" value="LDH C-terminal domain-like"/>
    <property type="match status" value="1"/>
</dbReference>
<dbReference type="SUPFAM" id="SSF51735">
    <property type="entry name" value="NAD(P)-binding Rossmann-fold domains"/>
    <property type="match status" value="1"/>
</dbReference>
<dbReference type="PROSITE" id="PS00064">
    <property type="entry name" value="L_LDH"/>
    <property type="match status" value="1"/>
</dbReference>
<sequence>MLKRNKVVLVGAGGVGSSFAYALTIDNSLVHELVIIDVAQDKAKGEVMDLNHGQMFLEKNIKIAFGNYDDCSDADIVVITAGLNQKPGETRLDLVGKNTKIFKEIVTGVVSSGFNGIFVIASNPVDIMTYVTMKYSNFPTHKVIGTGTTLDTSRLRYFLAERFNVNTQNIHSYIMGEHGDSSFATWDETKIAMKSLSEYIAEGTIREVELDEIHKKVVNAAYEVIKLKGATYYAIGLGIKKIVNAIISDQNLILPISSYINGQYGNFIKDIYIGAPAVVCKEGVKEVLDFKISDRELEKFKISANQLKSYIDKIEF</sequence>
<keyword id="KW-0021">Allosteric enzyme</keyword>
<keyword id="KW-0963">Cytoplasm</keyword>
<keyword id="KW-0520">NAD</keyword>
<keyword id="KW-0560">Oxidoreductase</keyword>
<keyword id="KW-0597">Phosphoprotein</keyword>
<protein>
    <recommendedName>
        <fullName evidence="1">L-lactate dehydrogenase</fullName>
        <shortName evidence="1">L-LDH</shortName>
        <ecNumber evidence="1">1.1.1.27</ecNumber>
    </recommendedName>
</protein>
<reference key="1">
    <citation type="submission" date="2004-12" db="EMBL/GenBank/DDBJ databases">
        <title>The genome sequence of Borrelia hermsii and Borrelia turicatae: comparative analysis of two agents of endemic N. America relapsing fever.</title>
        <authorList>
            <person name="Porcella S.F."/>
            <person name="Raffel S.J."/>
            <person name="Schrumpf M.E."/>
            <person name="Montgomery B."/>
            <person name="Smith T."/>
            <person name="Schwan T.G."/>
        </authorList>
    </citation>
    <scope>NUCLEOTIDE SEQUENCE [LARGE SCALE GENOMIC DNA]</scope>
    <source>
        <strain>HS1 / DAH</strain>
    </source>
</reference>
<name>LDH_BORHD</name>
<organism>
    <name type="scientific">Borrelia hermsii (strain HS1 / DAH)</name>
    <dbReference type="NCBI Taxonomy" id="314723"/>
    <lineage>
        <taxon>Bacteria</taxon>
        <taxon>Pseudomonadati</taxon>
        <taxon>Spirochaetota</taxon>
        <taxon>Spirochaetia</taxon>
        <taxon>Spirochaetales</taxon>
        <taxon>Borreliaceae</taxon>
        <taxon>Borrelia</taxon>
    </lineage>
</organism>
<feature type="chain" id="PRO_1000126153" description="L-lactate dehydrogenase">
    <location>
        <begin position="1"/>
        <end position="316"/>
    </location>
</feature>
<feature type="active site" description="Proton acceptor" evidence="1">
    <location>
        <position position="178"/>
    </location>
</feature>
<feature type="binding site" evidence="1">
    <location>
        <position position="15"/>
    </location>
    <ligand>
        <name>NAD(+)</name>
        <dbReference type="ChEBI" id="CHEBI:57540"/>
    </ligand>
</feature>
<feature type="binding site" evidence="1">
    <location>
        <position position="37"/>
    </location>
    <ligand>
        <name>NAD(+)</name>
        <dbReference type="ChEBI" id="CHEBI:57540"/>
    </ligand>
</feature>
<feature type="binding site" evidence="1">
    <location>
        <position position="42"/>
    </location>
    <ligand>
        <name>NAD(+)</name>
        <dbReference type="ChEBI" id="CHEBI:57540"/>
    </ligand>
</feature>
<feature type="binding site" evidence="1">
    <location>
        <position position="68"/>
    </location>
    <ligand>
        <name>NAD(+)</name>
        <dbReference type="ChEBI" id="CHEBI:57540"/>
    </ligand>
</feature>
<feature type="binding site" evidence="1">
    <location>
        <begin position="82"/>
        <end position="83"/>
    </location>
    <ligand>
        <name>NAD(+)</name>
        <dbReference type="ChEBI" id="CHEBI:57540"/>
    </ligand>
</feature>
<feature type="binding site" evidence="1">
    <location>
        <position position="85"/>
    </location>
    <ligand>
        <name>substrate</name>
    </ligand>
</feature>
<feature type="binding site" evidence="1">
    <location>
        <position position="91"/>
    </location>
    <ligand>
        <name>substrate</name>
    </ligand>
</feature>
<feature type="binding site" evidence="1">
    <location>
        <begin position="121"/>
        <end position="123"/>
    </location>
    <ligand>
        <name>NAD(+)</name>
        <dbReference type="ChEBI" id="CHEBI:57540"/>
    </ligand>
</feature>
<feature type="binding site" evidence="1">
    <location>
        <begin position="123"/>
        <end position="126"/>
    </location>
    <ligand>
        <name>substrate</name>
    </ligand>
</feature>
<feature type="binding site" evidence="1">
    <location>
        <position position="146"/>
    </location>
    <ligand>
        <name>NAD(+)</name>
        <dbReference type="ChEBI" id="CHEBI:57540"/>
    </ligand>
</feature>
<feature type="binding site" evidence="1">
    <location>
        <begin position="151"/>
        <end position="154"/>
    </location>
    <ligand>
        <name>substrate</name>
    </ligand>
</feature>
<feature type="binding site" evidence="1">
    <location>
        <position position="156"/>
    </location>
    <ligand>
        <name>beta-D-fructose 1,6-bisphosphate</name>
        <dbReference type="ChEBI" id="CHEBI:32966"/>
        <note>allosteric activator</note>
    </ligand>
</feature>
<feature type="binding site" evidence="1">
    <location>
        <position position="171"/>
    </location>
    <ligand>
        <name>beta-D-fructose 1,6-bisphosphate</name>
        <dbReference type="ChEBI" id="CHEBI:32966"/>
        <note>allosteric activator</note>
    </ligand>
</feature>
<feature type="binding site" evidence="1">
    <location>
        <position position="231"/>
    </location>
    <ligand>
        <name>substrate</name>
    </ligand>
</feature>
<feature type="modified residue" description="Phosphotyrosine" evidence="1">
    <location>
        <position position="222"/>
    </location>
</feature>
<proteinExistence type="inferred from homology"/>